<dbReference type="EC" id="5.3.1.9" evidence="1"/>
<dbReference type="EMBL" id="CP000828">
    <property type="protein sequence ID" value="ABW29251.1"/>
    <property type="molecule type" value="Genomic_DNA"/>
</dbReference>
<dbReference type="RefSeq" id="WP_012164582.1">
    <property type="nucleotide sequence ID" value="NC_009925.1"/>
</dbReference>
<dbReference type="SMR" id="B0CCT9"/>
<dbReference type="STRING" id="329726.AM1_4272"/>
<dbReference type="KEGG" id="amr:AM1_4272"/>
<dbReference type="eggNOG" id="COG0166">
    <property type="taxonomic scope" value="Bacteria"/>
</dbReference>
<dbReference type="HOGENOM" id="CLU_033288_0_0_3"/>
<dbReference type="OrthoDB" id="140919at2"/>
<dbReference type="UniPathway" id="UPA00109">
    <property type="reaction ID" value="UER00181"/>
</dbReference>
<dbReference type="UniPathway" id="UPA00138"/>
<dbReference type="Proteomes" id="UP000000268">
    <property type="component" value="Chromosome"/>
</dbReference>
<dbReference type="GO" id="GO:0005829">
    <property type="term" value="C:cytosol"/>
    <property type="evidence" value="ECO:0007669"/>
    <property type="project" value="TreeGrafter"/>
</dbReference>
<dbReference type="GO" id="GO:0097367">
    <property type="term" value="F:carbohydrate derivative binding"/>
    <property type="evidence" value="ECO:0007669"/>
    <property type="project" value="InterPro"/>
</dbReference>
<dbReference type="GO" id="GO:0004347">
    <property type="term" value="F:glucose-6-phosphate isomerase activity"/>
    <property type="evidence" value="ECO:0007669"/>
    <property type="project" value="UniProtKB-UniRule"/>
</dbReference>
<dbReference type="GO" id="GO:0048029">
    <property type="term" value="F:monosaccharide binding"/>
    <property type="evidence" value="ECO:0007669"/>
    <property type="project" value="TreeGrafter"/>
</dbReference>
<dbReference type="GO" id="GO:0006094">
    <property type="term" value="P:gluconeogenesis"/>
    <property type="evidence" value="ECO:0007669"/>
    <property type="project" value="UniProtKB-UniRule"/>
</dbReference>
<dbReference type="GO" id="GO:0051156">
    <property type="term" value="P:glucose 6-phosphate metabolic process"/>
    <property type="evidence" value="ECO:0007669"/>
    <property type="project" value="TreeGrafter"/>
</dbReference>
<dbReference type="GO" id="GO:0006096">
    <property type="term" value="P:glycolytic process"/>
    <property type="evidence" value="ECO:0007669"/>
    <property type="project" value="UniProtKB-UniRule"/>
</dbReference>
<dbReference type="CDD" id="cd05015">
    <property type="entry name" value="SIS_PGI_1"/>
    <property type="match status" value="1"/>
</dbReference>
<dbReference type="CDD" id="cd05016">
    <property type="entry name" value="SIS_PGI_2"/>
    <property type="match status" value="1"/>
</dbReference>
<dbReference type="FunFam" id="3.40.50.10490:FF:000021">
    <property type="entry name" value="Glucose-6-phosphate isomerase"/>
    <property type="match status" value="1"/>
</dbReference>
<dbReference type="FunFam" id="3.40.50.10490:FF:000023">
    <property type="entry name" value="Glucose-6-phosphate isomerase"/>
    <property type="match status" value="1"/>
</dbReference>
<dbReference type="Gene3D" id="3.40.50.10490">
    <property type="entry name" value="Glucose-6-phosphate isomerase like protein, domain 1"/>
    <property type="match status" value="2"/>
</dbReference>
<dbReference type="HAMAP" id="MF_00473">
    <property type="entry name" value="G6P_isomerase"/>
    <property type="match status" value="1"/>
</dbReference>
<dbReference type="InterPro" id="IPR001672">
    <property type="entry name" value="G6P_Isomerase"/>
</dbReference>
<dbReference type="InterPro" id="IPR018189">
    <property type="entry name" value="Phosphoglucose_isomerase_CS"/>
</dbReference>
<dbReference type="InterPro" id="IPR046348">
    <property type="entry name" value="SIS_dom_sf"/>
</dbReference>
<dbReference type="InterPro" id="IPR035476">
    <property type="entry name" value="SIS_PGI_1"/>
</dbReference>
<dbReference type="InterPro" id="IPR035482">
    <property type="entry name" value="SIS_PGI_2"/>
</dbReference>
<dbReference type="NCBIfam" id="NF010696">
    <property type="entry name" value="PRK14096.1"/>
    <property type="match status" value="1"/>
</dbReference>
<dbReference type="PANTHER" id="PTHR11469">
    <property type="entry name" value="GLUCOSE-6-PHOSPHATE ISOMERASE"/>
    <property type="match status" value="1"/>
</dbReference>
<dbReference type="PANTHER" id="PTHR11469:SF1">
    <property type="entry name" value="GLUCOSE-6-PHOSPHATE ISOMERASE"/>
    <property type="match status" value="1"/>
</dbReference>
<dbReference type="Pfam" id="PF00342">
    <property type="entry name" value="PGI"/>
    <property type="match status" value="2"/>
</dbReference>
<dbReference type="PRINTS" id="PR00662">
    <property type="entry name" value="G6PISOMERASE"/>
</dbReference>
<dbReference type="SUPFAM" id="SSF53697">
    <property type="entry name" value="SIS domain"/>
    <property type="match status" value="1"/>
</dbReference>
<dbReference type="PROSITE" id="PS00174">
    <property type="entry name" value="P_GLUCOSE_ISOMERASE_2"/>
    <property type="match status" value="1"/>
</dbReference>
<dbReference type="PROSITE" id="PS51463">
    <property type="entry name" value="P_GLUCOSE_ISOMERASE_3"/>
    <property type="match status" value="1"/>
</dbReference>
<gene>
    <name evidence="1" type="primary">pgi</name>
    <name type="ordered locus">AM1_4272</name>
</gene>
<protein>
    <recommendedName>
        <fullName evidence="1">Glucose-6-phosphate isomerase</fullName>
        <shortName evidence="1">GPI</shortName>
        <ecNumber evidence="1">5.3.1.9</ecNumber>
    </recommendedName>
    <alternativeName>
        <fullName evidence="1">Phosphoglucose isomerase</fullName>
        <shortName evidence="1">PGI</shortName>
    </alternativeName>
    <alternativeName>
        <fullName evidence="1">Phosphohexose isomerase</fullName>
        <shortName evidence="1">PHI</shortName>
    </alternativeName>
</protein>
<reference key="1">
    <citation type="journal article" date="2008" name="Proc. Natl. Acad. Sci. U.S.A.">
        <title>Niche adaptation and genome expansion in the chlorophyll d-producing cyanobacterium Acaryochloris marina.</title>
        <authorList>
            <person name="Swingley W.D."/>
            <person name="Chen M."/>
            <person name="Cheung P.C."/>
            <person name="Conrad A.L."/>
            <person name="Dejesa L.C."/>
            <person name="Hao J."/>
            <person name="Honchak B.M."/>
            <person name="Karbach L.E."/>
            <person name="Kurdoglu A."/>
            <person name="Lahiri S."/>
            <person name="Mastrian S.D."/>
            <person name="Miyashita H."/>
            <person name="Page L."/>
            <person name="Ramakrishna P."/>
            <person name="Satoh S."/>
            <person name="Sattley W.M."/>
            <person name="Shimada Y."/>
            <person name="Taylor H.L."/>
            <person name="Tomo T."/>
            <person name="Tsuchiya T."/>
            <person name="Wang Z.T."/>
            <person name="Raymond J."/>
            <person name="Mimuro M."/>
            <person name="Blankenship R.E."/>
            <person name="Touchman J.W."/>
        </authorList>
    </citation>
    <scope>NUCLEOTIDE SEQUENCE [LARGE SCALE GENOMIC DNA]</scope>
    <source>
        <strain>MBIC 11017</strain>
    </source>
</reference>
<feature type="chain" id="PRO_1000081228" description="Glucose-6-phosphate isomerase">
    <location>
        <begin position="1"/>
        <end position="529"/>
    </location>
</feature>
<feature type="active site" description="Proton donor" evidence="1">
    <location>
        <position position="322"/>
    </location>
</feature>
<feature type="active site" evidence="1">
    <location>
        <position position="351"/>
    </location>
</feature>
<feature type="active site" evidence="1">
    <location>
        <position position="455"/>
    </location>
</feature>
<name>G6PI_ACAM1</name>
<sequence>MDAAALWQRYQDWLYYHEQLGIYVDISRMSFDDAFVERLEPKFVKAFKEMDALEAGAIANPDENRMVGHYWLRDSNLAPTPELKKEIITTLEKIEAFAADVHAGRIKPATAPRFTDVISIGIGGSSLGPQFVSQALAVLHPALELHFIDNTDPAGIDYILDRVQDRLDTTLVVTISKSGGTPETRNGMLEAKNRFKNLGLDFPKHAVAVTGYGSKLAQIAEEEGWLAMLPMHDWVGGRTSELSAVGLVPASLQGIAIREMLAGAKAMDEATRVHDLKTNPAALLALSWYFAGEGAGKKDMVILPYKDSLMLFSRYLQQLVMESLGKEKDLDDKIVHQGIAVYGNKGSTDQHAYVQELREGIPNFFLTFIEVLKDRDGTRFEVEPGVTSGDYLSGFLLGTREALYEKRRDSITVTLPEVTSKQVGALIALYERAVGLYASLINVNAYHQPGVEAGKKAATDTIALQNKIVQILRNTLTPLPITSLADKAEAPDKIETVYKIVRHLAANKRGVELYGNPAEPGSLQVTLKG</sequence>
<accession>B0CCT9</accession>
<proteinExistence type="inferred from homology"/>
<keyword id="KW-0963">Cytoplasm</keyword>
<keyword id="KW-0312">Gluconeogenesis</keyword>
<keyword id="KW-0324">Glycolysis</keyword>
<keyword id="KW-0413">Isomerase</keyword>
<keyword id="KW-1185">Reference proteome</keyword>
<evidence type="ECO:0000255" key="1">
    <source>
        <dbReference type="HAMAP-Rule" id="MF_00473"/>
    </source>
</evidence>
<organism>
    <name type="scientific">Acaryochloris marina (strain MBIC 11017)</name>
    <dbReference type="NCBI Taxonomy" id="329726"/>
    <lineage>
        <taxon>Bacteria</taxon>
        <taxon>Bacillati</taxon>
        <taxon>Cyanobacteriota</taxon>
        <taxon>Cyanophyceae</taxon>
        <taxon>Acaryochloridales</taxon>
        <taxon>Acaryochloridaceae</taxon>
        <taxon>Acaryochloris</taxon>
    </lineage>
</organism>
<comment type="function">
    <text evidence="1">Catalyzes the reversible isomerization of glucose-6-phosphate to fructose-6-phosphate.</text>
</comment>
<comment type="catalytic activity">
    <reaction evidence="1">
        <text>alpha-D-glucose 6-phosphate = beta-D-fructose 6-phosphate</text>
        <dbReference type="Rhea" id="RHEA:11816"/>
        <dbReference type="ChEBI" id="CHEBI:57634"/>
        <dbReference type="ChEBI" id="CHEBI:58225"/>
        <dbReference type="EC" id="5.3.1.9"/>
    </reaction>
</comment>
<comment type="pathway">
    <text evidence="1">Carbohydrate biosynthesis; gluconeogenesis.</text>
</comment>
<comment type="pathway">
    <text evidence="1">Carbohydrate degradation; glycolysis; D-glyceraldehyde 3-phosphate and glycerone phosphate from D-glucose: step 2/4.</text>
</comment>
<comment type="subcellular location">
    <subcellularLocation>
        <location evidence="1">Cytoplasm</location>
    </subcellularLocation>
</comment>
<comment type="similarity">
    <text evidence="1">Belongs to the GPI family.</text>
</comment>